<name>ABF1_KLUMA</name>
<proteinExistence type="inferred from homology"/>
<gene>
    <name type="primary">ABF1</name>
    <name type="synonym">BAF1</name>
</gene>
<sequence>MSLYEYNDPIINKDLAQADPVMGQNRTFPTLEAWYDVINDYEFQSRCPIILKNSHKTKHFTFACHLKSCPFKILLSHQGPVSVQNGDGSPGVGVGDEHGHHHHHNMHAHHHHHHQNGHTNGHGNSGDDVSEQEAQQDDEDDDAAVTAAIAAAVAAVADSQETIKGPFAVTKIEPYHNHPLESNLSLQRFVLTKIPKILQVDLKFDAILESLCNDEDNTVAKFRVAQYVEESGIIDIIKQRYGLTDAEMDKKMLSNIARRVTTDKARFVLKRKKEGVYMLPNGHQISGADQHQHQLQHQHQHQHQHQHQHQHQHQSQDQHQNQHQQHVGNDNHVYQDRIHSQSDQDEAGVHNLDDNNVRVAAAAAAAAAAALQSRDSHVSEELKLNCGTGQDEDGIEDDNHSSKRQLHRSDRDRVAEALKMATRDILSNQNVDSDVNVDVDLVTGHKQLSPHDDMAEQLRLLSSHLKEVEAEENVSDSNLKKDDVQDENIQPELRGQ</sequence>
<accession>P33293</accession>
<organism>
    <name type="scientific">Kluyveromyces marxianus</name>
    <name type="common">Yeast</name>
    <name type="synonym">Candida kefyr</name>
    <dbReference type="NCBI Taxonomy" id="4911"/>
    <lineage>
        <taxon>Eukaryota</taxon>
        <taxon>Fungi</taxon>
        <taxon>Dikarya</taxon>
        <taxon>Ascomycota</taxon>
        <taxon>Saccharomycotina</taxon>
        <taxon>Saccharomycetes</taxon>
        <taxon>Saccharomycetales</taxon>
        <taxon>Saccharomycetaceae</taxon>
        <taxon>Kluyveromyces</taxon>
    </lineage>
</organism>
<dbReference type="EMBL" id="Z19865">
    <property type="protein sequence ID" value="CAA79673.1"/>
    <property type="molecule type" value="Genomic_DNA"/>
</dbReference>
<dbReference type="PIR" id="S33791">
    <property type="entry name" value="S33791"/>
</dbReference>
<dbReference type="VEuPathDB" id="FungiDB:KLMA_30566"/>
<dbReference type="GO" id="GO:0005634">
    <property type="term" value="C:nucleus"/>
    <property type="evidence" value="ECO:0007669"/>
    <property type="project" value="UniProtKB-SubCell"/>
</dbReference>
<dbReference type="GO" id="GO:0003677">
    <property type="term" value="F:DNA binding"/>
    <property type="evidence" value="ECO:0007669"/>
    <property type="project" value="UniProtKB-KW"/>
</dbReference>
<dbReference type="GO" id="GO:0006338">
    <property type="term" value="P:chromatin remodeling"/>
    <property type="evidence" value="ECO:0007669"/>
    <property type="project" value="InterPro"/>
</dbReference>
<dbReference type="GO" id="GO:0006281">
    <property type="term" value="P:DNA repair"/>
    <property type="evidence" value="ECO:0007669"/>
    <property type="project" value="UniProtKB-KW"/>
</dbReference>
<dbReference type="GO" id="GO:0006260">
    <property type="term" value="P:DNA replication"/>
    <property type="evidence" value="ECO:0007669"/>
    <property type="project" value="UniProtKB-KW"/>
</dbReference>
<dbReference type="InterPro" id="IPR006774">
    <property type="entry name" value="BAF1_ABF1"/>
</dbReference>
<dbReference type="Pfam" id="PF04684">
    <property type="entry name" value="BAF1_ABF1"/>
    <property type="match status" value="2"/>
</dbReference>
<protein>
    <recommendedName>
        <fullName>ARS-binding factor 1</fullName>
    </recommendedName>
    <alternativeName>
        <fullName>Bidirectionally acting factor</fullName>
    </alternativeName>
</protein>
<feature type="chain" id="PRO_0000064806" description="ARS-binding factor 1">
    <location>
        <begin position="1"/>
        <end position="496"/>
    </location>
</feature>
<feature type="region of interest" description="Disordered" evidence="3">
    <location>
        <begin position="82"/>
        <end position="143"/>
    </location>
</feature>
<feature type="region of interest" description="Disordered" evidence="3">
    <location>
        <begin position="280"/>
        <end position="326"/>
    </location>
</feature>
<feature type="region of interest" description="Disordered" evidence="3">
    <location>
        <begin position="386"/>
        <end position="412"/>
    </location>
</feature>
<feature type="region of interest" description="Disordered" evidence="3">
    <location>
        <begin position="469"/>
        <end position="496"/>
    </location>
</feature>
<feature type="compositionally biased region" description="Basic residues" evidence="3">
    <location>
        <begin position="100"/>
        <end position="116"/>
    </location>
</feature>
<feature type="compositionally biased region" description="Acidic residues" evidence="3">
    <location>
        <begin position="128"/>
        <end position="143"/>
    </location>
</feature>
<feature type="compositionally biased region" description="Basic residues" evidence="3">
    <location>
        <begin position="294"/>
        <end position="312"/>
    </location>
</feature>
<feature type="compositionally biased region" description="Low complexity" evidence="3">
    <location>
        <begin position="313"/>
        <end position="326"/>
    </location>
</feature>
<feature type="compositionally biased region" description="Basic and acidic residues" evidence="3">
    <location>
        <begin position="397"/>
        <end position="412"/>
    </location>
</feature>
<feature type="modified residue" description="Phosphoserine; by PKC" evidence="2">
    <location>
        <position position="402"/>
    </location>
</feature>
<comment type="function">
    <text>General regulatory factor (GRF) that contributes to transcriptional activation of a large number of genes, as well as to DNA replication, silencing and telomere structure. Involved in the transcription activation of a subset of ribosomal protein genes. Binds the ARS-elements found in many promoters. Binds to the sequence 5'-TCN(7)ACG-3'.</text>
</comment>
<comment type="subcellular location">
    <subcellularLocation>
        <location>Nucleus</location>
    </subcellularLocation>
</comment>
<comment type="PTM">
    <text evidence="1">Extensively phosphorylated on Ser and Thr residues.</text>
</comment>
<comment type="similarity">
    <text evidence="4">Belongs to the ABF1 family.</text>
</comment>
<keyword id="KW-0010">Activator</keyword>
<keyword id="KW-0227">DNA damage</keyword>
<keyword id="KW-0234">DNA repair</keyword>
<keyword id="KW-0235">DNA replication</keyword>
<keyword id="KW-0238">DNA-binding</keyword>
<keyword id="KW-0539">Nucleus</keyword>
<keyword id="KW-0597">Phosphoprotein</keyword>
<keyword id="KW-0804">Transcription</keyword>
<keyword id="KW-0805">Transcription regulation</keyword>
<evidence type="ECO:0000250" key="1"/>
<evidence type="ECO:0000255" key="2"/>
<evidence type="ECO:0000256" key="3">
    <source>
        <dbReference type="SAM" id="MobiDB-lite"/>
    </source>
</evidence>
<evidence type="ECO:0000305" key="4"/>
<reference key="1">
    <citation type="journal article" date="1993" name="Biochim. Biophys. Acta">
        <title>Structure of the ABF1-homologue from Kluyveromyces marxianus.</title>
        <authorList>
            <person name="Oberye E.H.H."/>
            <person name="Maurer K."/>
            <person name="Mager W.H."/>
            <person name="Planta R.J."/>
        </authorList>
    </citation>
    <scope>NUCLEOTIDE SEQUENCE [GENOMIC DNA]</scope>
    <source>
        <strain>ATCC 26548 / CBS 6556 / NRRL Y-7571</strain>
    </source>
</reference>